<keyword id="KW-0256">Endoplasmic reticulum</keyword>
<keyword id="KW-0444">Lipid biosynthesis</keyword>
<keyword id="KW-0443">Lipid metabolism</keyword>
<keyword id="KW-0472">Membrane</keyword>
<keyword id="KW-1185">Reference proteome</keyword>
<keyword id="KW-0752">Steroid biosynthesis</keyword>
<keyword id="KW-0753">Steroid metabolism</keyword>
<keyword id="KW-0756">Sterol biosynthesis</keyword>
<keyword id="KW-1207">Sterol metabolism</keyword>
<keyword id="KW-0812">Transmembrane</keyword>
<keyword id="KW-1133">Transmembrane helix</keyword>
<comment type="subcellular location">
    <subcellularLocation>
        <location evidence="2">Endoplasmic reticulum membrane</location>
        <topology evidence="2">Multi-pass membrane protein</topology>
    </subcellularLocation>
</comment>
<comment type="similarity">
    <text evidence="2">Belongs to the ERG28 family.</text>
</comment>
<comment type="sequence caution" evidence="2">
    <conflict type="erroneous gene model prediction">
        <sequence resource="EMBL-CDS" id="AAC34343"/>
    </conflict>
</comment>
<name>ERG28_ARATH</name>
<feature type="chain" id="PRO_0000193906" description="Ergosterol biosynthetic protein 28">
    <location>
        <begin position="1"/>
        <end position="129"/>
    </location>
</feature>
<feature type="transmembrane region" description="Helical" evidence="1">
    <location>
        <begin position="4"/>
        <end position="24"/>
    </location>
</feature>
<feature type="transmembrane region" description="Helical" evidence="1">
    <location>
        <begin position="46"/>
        <end position="66"/>
    </location>
</feature>
<feature type="transmembrane region" description="Helical" evidence="1">
    <location>
        <begin position="71"/>
        <end position="91"/>
    </location>
</feature>
<feature type="transmembrane region" description="Helical" evidence="1">
    <location>
        <begin position="96"/>
        <end position="116"/>
    </location>
</feature>
<proteinExistence type="evidence at transcript level"/>
<evidence type="ECO:0000255" key="1"/>
<evidence type="ECO:0000305" key="2"/>
<gene>
    <name type="ordered locus">At1g10030</name>
    <name type="ORF">T27I1.5</name>
</gene>
<organism>
    <name type="scientific">Arabidopsis thaliana</name>
    <name type="common">Mouse-ear cress</name>
    <dbReference type="NCBI Taxonomy" id="3702"/>
    <lineage>
        <taxon>Eukaryota</taxon>
        <taxon>Viridiplantae</taxon>
        <taxon>Streptophyta</taxon>
        <taxon>Embryophyta</taxon>
        <taxon>Tracheophyta</taxon>
        <taxon>Spermatophyta</taxon>
        <taxon>Magnoliopsida</taxon>
        <taxon>eudicotyledons</taxon>
        <taxon>Gunneridae</taxon>
        <taxon>Pentapetalae</taxon>
        <taxon>rosids</taxon>
        <taxon>malvids</taxon>
        <taxon>Brassicales</taxon>
        <taxon>Brassicaceae</taxon>
        <taxon>Camelineae</taxon>
        <taxon>Arabidopsis</taxon>
    </lineage>
</organism>
<dbReference type="EMBL" id="AC004122">
    <property type="protein sequence ID" value="AAC34343.1"/>
    <property type="status" value="ALT_SEQ"/>
    <property type="molecule type" value="Genomic_DNA"/>
</dbReference>
<dbReference type="EMBL" id="CP002684">
    <property type="protein sequence ID" value="AEE28530.1"/>
    <property type="molecule type" value="Genomic_DNA"/>
</dbReference>
<dbReference type="EMBL" id="BT008773">
    <property type="protein sequence ID" value="AAP68212.1"/>
    <property type="molecule type" value="mRNA"/>
</dbReference>
<dbReference type="EMBL" id="AK227737">
    <property type="protein sequence ID" value="BAE99721.1"/>
    <property type="molecule type" value="mRNA"/>
</dbReference>
<dbReference type="PIR" id="T00622">
    <property type="entry name" value="T00622"/>
</dbReference>
<dbReference type="SMR" id="O80594"/>
<dbReference type="BioGRID" id="22778">
    <property type="interactions" value="15"/>
</dbReference>
<dbReference type="FunCoup" id="O80594">
    <property type="interactions" value="1147"/>
</dbReference>
<dbReference type="IntAct" id="O80594">
    <property type="interactions" value="17"/>
</dbReference>
<dbReference type="STRING" id="3702.O80594"/>
<dbReference type="PaxDb" id="3702-AT1G10030.1"/>
<dbReference type="ProteomicsDB" id="220691"/>
<dbReference type="EnsemblPlants" id="AT1G10030.1">
    <property type="protein sequence ID" value="AT1G10030.1"/>
    <property type="gene ID" value="AT1G10030"/>
</dbReference>
<dbReference type="GeneID" id="837538"/>
<dbReference type="Gramene" id="AT1G10030.1">
    <property type="protein sequence ID" value="AT1G10030.1"/>
    <property type="gene ID" value="AT1G10030"/>
</dbReference>
<dbReference type="KEGG" id="ath:AT1G10030"/>
<dbReference type="Araport" id="AT1G10030"/>
<dbReference type="TAIR" id="AT1G10030">
    <property type="gene designation" value="ERG28"/>
</dbReference>
<dbReference type="eggNOG" id="KOG3455">
    <property type="taxonomic scope" value="Eukaryota"/>
</dbReference>
<dbReference type="HOGENOM" id="CLU_114589_1_0_1"/>
<dbReference type="InParanoid" id="O80594"/>
<dbReference type="OMA" id="TTMTEIH"/>
<dbReference type="OrthoDB" id="6485510at2759"/>
<dbReference type="PhylomeDB" id="O80594"/>
<dbReference type="PRO" id="PR:O80594"/>
<dbReference type="Proteomes" id="UP000006548">
    <property type="component" value="Chromosome 1"/>
</dbReference>
<dbReference type="ExpressionAtlas" id="O80594">
    <property type="expression patterns" value="baseline and differential"/>
</dbReference>
<dbReference type="GO" id="GO:0005783">
    <property type="term" value="C:endoplasmic reticulum"/>
    <property type="evidence" value="ECO:0000314"/>
    <property type="project" value="TAIR"/>
</dbReference>
<dbReference type="GO" id="GO:0005789">
    <property type="term" value="C:endoplasmic reticulum membrane"/>
    <property type="evidence" value="ECO:0007669"/>
    <property type="project" value="UniProtKB-SubCell"/>
</dbReference>
<dbReference type="GO" id="GO:0030674">
    <property type="term" value="F:protein-macromolecule adaptor activity"/>
    <property type="evidence" value="ECO:0000353"/>
    <property type="project" value="TAIR"/>
</dbReference>
<dbReference type="GO" id="GO:2000012">
    <property type="term" value="P:regulation of auxin polar transport"/>
    <property type="evidence" value="ECO:0000315"/>
    <property type="project" value="TAIR"/>
</dbReference>
<dbReference type="GO" id="GO:0016126">
    <property type="term" value="P:sterol biosynthetic process"/>
    <property type="evidence" value="ECO:0007669"/>
    <property type="project" value="UniProtKB-KW"/>
</dbReference>
<dbReference type="InterPro" id="IPR005352">
    <property type="entry name" value="Erg28"/>
</dbReference>
<dbReference type="PANTHER" id="PTHR15451:SF19">
    <property type="entry name" value="ERGOSTEROL BIOSYNTHETIC PROTEIN 28 HOMOLOG"/>
    <property type="match status" value="1"/>
</dbReference>
<dbReference type="PANTHER" id="PTHR15451">
    <property type="entry name" value="ERGOSTEROL BIOSYNTHETIC PROTEIN 28-RELATED"/>
    <property type="match status" value="1"/>
</dbReference>
<dbReference type="Pfam" id="PF03694">
    <property type="entry name" value="Erg28"/>
    <property type="match status" value="1"/>
</dbReference>
<reference key="1">
    <citation type="journal article" date="2000" name="Nature">
        <title>Sequence and analysis of chromosome 1 of the plant Arabidopsis thaliana.</title>
        <authorList>
            <person name="Theologis A."/>
            <person name="Ecker J.R."/>
            <person name="Palm C.J."/>
            <person name="Federspiel N.A."/>
            <person name="Kaul S."/>
            <person name="White O."/>
            <person name="Alonso J."/>
            <person name="Altafi H."/>
            <person name="Araujo R."/>
            <person name="Bowman C.L."/>
            <person name="Brooks S.Y."/>
            <person name="Buehler E."/>
            <person name="Chan A."/>
            <person name="Chao Q."/>
            <person name="Chen H."/>
            <person name="Cheuk R.F."/>
            <person name="Chin C.W."/>
            <person name="Chung M.K."/>
            <person name="Conn L."/>
            <person name="Conway A.B."/>
            <person name="Conway A.R."/>
            <person name="Creasy T.H."/>
            <person name="Dewar K."/>
            <person name="Dunn P."/>
            <person name="Etgu P."/>
            <person name="Feldblyum T.V."/>
            <person name="Feng J.-D."/>
            <person name="Fong B."/>
            <person name="Fujii C.Y."/>
            <person name="Gill J.E."/>
            <person name="Goldsmith A.D."/>
            <person name="Haas B."/>
            <person name="Hansen N.F."/>
            <person name="Hughes B."/>
            <person name="Huizar L."/>
            <person name="Hunter J.L."/>
            <person name="Jenkins J."/>
            <person name="Johnson-Hopson C."/>
            <person name="Khan S."/>
            <person name="Khaykin E."/>
            <person name="Kim C.J."/>
            <person name="Koo H.L."/>
            <person name="Kremenetskaia I."/>
            <person name="Kurtz D.B."/>
            <person name="Kwan A."/>
            <person name="Lam B."/>
            <person name="Langin-Hooper S."/>
            <person name="Lee A."/>
            <person name="Lee J.M."/>
            <person name="Lenz C.A."/>
            <person name="Li J.H."/>
            <person name="Li Y.-P."/>
            <person name="Lin X."/>
            <person name="Liu S.X."/>
            <person name="Liu Z.A."/>
            <person name="Luros J.S."/>
            <person name="Maiti R."/>
            <person name="Marziali A."/>
            <person name="Militscher J."/>
            <person name="Miranda M."/>
            <person name="Nguyen M."/>
            <person name="Nierman W.C."/>
            <person name="Osborne B.I."/>
            <person name="Pai G."/>
            <person name="Peterson J."/>
            <person name="Pham P.K."/>
            <person name="Rizzo M."/>
            <person name="Rooney T."/>
            <person name="Rowley D."/>
            <person name="Sakano H."/>
            <person name="Salzberg S.L."/>
            <person name="Schwartz J.R."/>
            <person name="Shinn P."/>
            <person name="Southwick A.M."/>
            <person name="Sun H."/>
            <person name="Tallon L.J."/>
            <person name="Tambunga G."/>
            <person name="Toriumi M.J."/>
            <person name="Town C.D."/>
            <person name="Utterback T."/>
            <person name="Van Aken S."/>
            <person name="Vaysberg M."/>
            <person name="Vysotskaia V.S."/>
            <person name="Walker M."/>
            <person name="Wu D."/>
            <person name="Yu G."/>
            <person name="Fraser C.M."/>
            <person name="Venter J.C."/>
            <person name="Davis R.W."/>
        </authorList>
    </citation>
    <scope>NUCLEOTIDE SEQUENCE [LARGE SCALE GENOMIC DNA]</scope>
    <source>
        <strain>cv. Columbia</strain>
    </source>
</reference>
<reference key="2">
    <citation type="journal article" date="2017" name="Plant J.">
        <title>Araport11: a complete reannotation of the Arabidopsis thaliana reference genome.</title>
        <authorList>
            <person name="Cheng C.Y."/>
            <person name="Krishnakumar V."/>
            <person name="Chan A.P."/>
            <person name="Thibaud-Nissen F."/>
            <person name="Schobel S."/>
            <person name="Town C.D."/>
        </authorList>
    </citation>
    <scope>GENOME REANNOTATION</scope>
    <source>
        <strain>cv. Columbia</strain>
    </source>
</reference>
<reference key="3">
    <citation type="journal article" date="2003" name="Science">
        <title>Empirical analysis of transcriptional activity in the Arabidopsis genome.</title>
        <authorList>
            <person name="Yamada K."/>
            <person name="Lim J."/>
            <person name="Dale J.M."/>
            <person name="Chen H."/>
            <person name="Shinn P."/>
            <person name="Palm C.J."/>
            <person name="Southwick A.M."/>
            <person name="Wu H.C."/>
            <person name="Kim C.J."/>
            <person name="Nguyen M."/>
            <person name="Pham P.K."/>
            <person name="Cheuk R.F."/>
            <person name="Karlin-Newmann G."/>
            <person name="Liu S.X."/>
            <person name="Lam B."/>
            <person name="Sakano H."/>
            <person name="Wu T."/>
            <person name="Yu G."/>
            <person name="Miranda M."/>
            <person name="Quach H.L."/>
            <person name="Tripp M."/>
            <person name="Chang C.H."/>
            <person name="Lee J.M."/>
            <person name="Toriumi M.J."/>
            <person name="Chan M.M."/>
            <person name="Tang C.C."/>
            <person name="Onodera C.S."/>
            <person name="Deng J.M."/>
            <person name="Akiyama K."/>
            <person name="Ansari Y."/>
            <person name="Arakawa T."/>
            <person name="Banh J."/>
            <person name="Banno F."/>
            <person name="Bowser L."/>
            <person name="Brooks S.Y."/>
            <person name="Carninci P."/>
            <person name="Chao Q."/>
            <person name="Choy N."/>
            <person name="Enju A."/>
            <person name="Goldsmith A.D."/>
            <person name="Gurjal M."/>
            <person name="Hansen N.F."/>
            <person name="Hayashizaki Y."/>
            <person name="Johnson-Hopson C."/>
            <person name="Hsuan V.W."/>
            <person name="Iida K."/>
            <person name="Karnes M."/>
            <person name="Khan S."/>
            <person name="Koesema E."/>
            <person name="Ishida J."/>
            <person name="Jiang P.X."/>
            <person name="Jones T."/>
            <person name="Kawai J."/>
            <person name="Kamiya A."/>
            <person name="Meyers C."/>
            <person name="Nakajima M."/>
            <person name="Narusaka M."/>
            <person name="Seki M."/>
            <person name="Sakurai T."/>
            <person name="Satou M."/>
            <person name="Tamse R."/>
            <person name="Vaysberg M."/>
            <person name="Wallender E.K."/>
            <person name="Wong C."/>
            <person name="Yamamura Y."/>
            <person name="Yuan S."/>
            <person name="Shinozaki K."/>
            <person name="Davis R.W."/>
            <person name="Theologis A."/>
            <person name="Ecker J.R."/>
        </authorList>
    </citation>
    <scope>NUCLEOTIDE SEQUENCE [LARGE SCALE MRNA]</scope>
    <source>
        <strain>cv. Columbia</strain>
    </source>
</reference>
<reference key="4">
    <citation type="submission" date="2006-07" db="EMBL/GenBank/DDBJ databases">
        <title>Large-scale analysis of RIKEN Arabidopsis full-length (RAFL) cDNAs.</title>
        <authorList>
            <person name="Totoki Y."/>
            <person name="Seki M."/>
            <person name="Ishida J."/>
            <person name="Nakajima M."/>
            <person name="Enju A."/>
            <person name="Kamiya A."/>
            <person name="Narusaka M."/>
            <person name="Shin-i T."/>
            <person name="Nakagawa M."/>
            <person name="Sakamoto N."/>
            <person name="Oishi K."/>
            <person name="Kohara Y."/>
            <person name="Kobayashi M."/>
            <person name="Toyoda A."/>
            <person name="Sakaki Y."/>
            <person name="Sakurai T."/>
            <person name="Iida K."/>
            <person name="Akiyama K."/>
            <person name="Satou M."/>
            <person name="Toyoda T."/>
            <person name="Konagaya A."/>
            <person name="Carninci P."/>
            <person name="Kawai J."/>
            <person name="Hayashizaki Y."/>
            <person name="Shinozaki K."/>
        </authorList>
    </citation>
    <scope>NUCLEOTIDE SEQUENCE [LARGE SCALE MRNA]</scope>
    <source>
        <strain>cv. Columbia</strain>
    </source>
</reference>
<sequence length="129" mass="14804">MKALGYWLMVVGSLRLASVWFGFFNIWALRLAVFSQTTMSEVHGRTFGVWTLLTCTLCFLCAFNLENKPLYLATFLSFIYALGHFLTEYLFYQTMTIANLSTVGFFAGTSIVWMLLEWNSLEQPHSKLS</sequence>
<protein>
    <recommendedName>
        <fullName>Ergosterol biosynthetic protein 28</fullName>
    </recommendedName>
</protein>
<accession>O80594</accession>
<accession>Q7Y031</accession>